<evidence type="ECO:0000250" key="1"/>
<evidence type="ECO:0000250" key="2">
    <source>
        <dbReference type="UniProtKB" id="P08362"/>
    </source>
</evidence>
<evidence type="ECO:0000250" key="3">
    <source>
        <dbReference type="UniProtKB" id="Q786F2"/>
    </source>
</evidence>
<evidence type="ECO:0000255" key="4"/>
<evidence type="ECO:0000269" key="5">
    <source>
    </source>
</evidence>
<evidence type="ECO:0000269" key="6">
    <source>
    </source>
</evidence>
<evidence type="ECO:0000269" key="7">
    <source>
    </source>
</evidence>
<evidence type="ECO:0000305" key="8"/>
<evidence type="ECO:0000305" key="9">
    <source>
    </source>
</evidence>
<gene>
    <name type="primary">H</name>
</gene>
<keyword id="KW-1015">Disulfide bond</keyword>
<keyword id="KW-0325">Glycoprotein</keyword>
<keyword id="KW-0348">Hemagglutinin</keyword>
<keyword id="KW-1032">Host cell membrane</keyword>
<keyword id="KW-1043">Host membrane</keyword>
<keyword id="KW-0945">Host-virus interaction</keyword>
<keyword id="KW-0472">Membrane</keyword>
<keyword id="KW-0735">Signal-anchor</keyword>
<keyword id="KW-0812">Transmembrane</keyword>
<keyword id="KW-1133">Transmembrane helix</keyword>
<keyword id="KW-1161">Viral attachment to host cell</keyword>
<keyword id="KW-0261">Viral envelope protein</keyword>
<keyword id="KW-0946">Virion</keyword>
<keyword id="KW-1160">Virus entry into host cell</keyword>
<accession>P06830</accession>
<protein>
    <recommendedName>
        <fullName>Hemagglutinin glycoprotein</fullName>
    </recommendedName>
</protein>
<organismHost>
    <name type="scientific">Homo sapiens</name>
    <name type="common">Human</name>
    <dbReference type="NCBI Taxonomy" id="9606"/>
</organismHost>
<proteinExistence type="evidence at protein level"/>
<feature type="chain" id="PRO_0000142600" description="Hemagglutinin glycoprotein">
    <location>
        <begin position="1"/>
        <end position="617"/>
    </location>
</feature>
<feature type="topological domain" description="Intravirion" evidence="4">
    <location>
        <begin position="1"/>
        <end position="37"/>
    </location>
</feature>
<feature type="transmembrane region" description="Helical; Signal-anchor for type II membrane protein" evidence="4">
    <location>
        <begin position="38"/>
        <end position="58"/>
    </location>
</feature>
<feature type="topological domain" description="Virion surface" evidence="4">
    <location>
        <begin position="59"/>
        <end position="617"/>
    </location>
</feature>
<feature type="region of interest" description="Stalk" evidence="2">
    <location>
        <begin position="1"/>
        <end position="154"/>
    </location>
</feature>
<feature type="region of interest" description="Interaction with host NECTIN4 receptor" evidence="3">
    <location>
        <begin position="458"/>
        <end position="543"/>
    </location>
</feature>
<feature type="site" description="Interaction with host SLAMF1 receptor" evidence="2">
    <location>
        <position position="483"/>
    </location>
</feature>
<feature type="site" description="Interaction with host SLAMF1 receptor" evidence="2">
    <location>
        <position position="505"/>
    </location>
</feature>
<feature type="site" description="Interaction with host SLAMF1 receptor" evidence="2">
    <location>
        <position position="507"/>
    </location>
</feature>
<feature type="site" description="Interaction with host SLAMF1 receptor" evidence="2">
    <location>
        <position position="524"/>
    </location>
</feature>
<feature type="site" description="Interaction with host SLAMF1 receptor" evidence="2">
    <location>
        <position position="530"/>
    </location>
</feature>
<feature type="site" description="Interaction with host SLAMF1 receptor" evidence="2">
    <location>
        <position position="533"/>
    </location>
</feature>
<feature type="site" description="Interaction with host SLAMF1 receptor" evidence="2">
    <location>
        <position position="541"/>
    </location>
</feature>
<feature type="site" description="Interaction with host SLAMF1 receptor" evidence="2">
    <location>
        <position position="543"/>
    </location>
</feature>
<feature type="site" description="Interaction with host SLAMF1 receptor" evidence="2">
    <location>
        <position position="545"/>
    </location>
</feature>
<feature type="site" description="Interaction with host SLAMF1 receptor" evidence="2">
    <location>
        <position position="552"/>
    </location>
</feature>
<feature type="site" description="Interaction with host SLAMF1 receptor" evidence="2">
    <location>
        <position position="554"/>
    </location>
</feature>
<feature type="glycosylation site" description="N-linked (GlcNAc...) asparagine; by host" evidence="4">
    <location>
        <position position="168"/>
    </location>
</feature>
<feature type="glycosylation site" description="N-linked (GlcNAc...) asparagine; by host" evidence="4">
    <location>
        <position position="187"/>
    </location>
</feature>
<feature type="glycosylation site" description="N-linked (GlcNAc...) asparagine; by host" evidence="4">
    <location>
        <position position="200"/>
    </location>
</feature>
<feature type="glycosylation site" description="N-linked (GlcNAc...) asparagine; by host" evidence="4">
    <location>
        <position position="215"/>
    </location>
</feature>
<feature type="glycosylation site" description="N-linked (GlcNAc...) asparagine; by host" evidence="4">
    <location>
        <position position="238"/>
    </location>
</feature>
<feature type="disulfide bond" description="Interchain" evidence="2">
    <location>
        <position position="139"/>
    </location>
</feature>
<feature type="disulfide bond" description="Interchain" evidence="2">
    <location>
        <position position="154"/>
    </location>
</feature>
<feature type="disulfide bond" evidence="2">
    <location>
        <begin position="188"/>
        <end position="606"/>
    </location>
</feature>
<feature type="disulfide bond" evidence="2">
    <location>
        <begin position="287"/>
        <end position="300"/>
    </location>
</feature>
<feature type="disulfide bond" evidence="2">
    <location>
        <begin position="381"/>
        <end position="494"/>
    </location>
</feature>
<feature type="disulfide bond" evidence="2">
    <location>
        <begin position="386"/>
        <end position="394"/>
    </location>
</feature>
<feature type="disulfide bond" evidence="2">
    <location>
        <begin position="570"/>
        <end position="579"/>
    </location>
</feature>
<feature type="mutagenesis site" description="Severely reduces hemadsorption and abrogates both fusion and CD46 down-regulation in HeLa cells." evidence="7">
    <original>Y</original>
    <variation>N</variation>
    <location>
        <position position="481"/>
    </location>
</feature>
<sequence length="617" mass="69078">MSPQRDRINAFYKDNPHPKGSRIVINREHLMIDRPYVLLAVLFVMFLSLIGLLAIAGIRLHRAAIYTAEIHKSLSTNLDVTNSIEHQVKDVLTPLFKIIGDEVGLRTPQRFTDLVKFISDKIKFLNPDREYDFRDLTWCINPPERIKLDYDQYCADVAAEELMNALVNSTLLETRTTNQFLAVSKGNCSGPTTIRGQFSNMSLSLLDLYLGRGYNVSSIVTMTSQGMYGGTYPVEKPNLSSKRSELSQLSMYRVFEVSVIRNPGLGAPVFHMTNYLEQPVSNDLSNCMVALGELKLAALCHGEDSITIPYQGSGKGVSFQLVKLGVWKSPTGMQSWVPLSTDDPVIDRLYLSSHRGVIADNQAKWAVPTTRTDDKLRMETCFQQACKGKIQALCENPECVPLKDNRIPSYGVLSVDLSLTVELKIKIASGFGPLITHGSGMDLYKSNHNNVYWLTIPPMKNLALGVINTLEWIPRFKVSPYLFTVPIKEAGEDCHAPTYLPAEVDGDVKLSSNLVILPGQDLQYVLATYDTSRVEHAVVYYVYSPGRSFSYFYPFRLPIKGVPIELQVECFTWDQKLWCRHFCVLADSESGGHITHSGMVGMGVSCTVTREDGTNRR</sequence>
<reference key="1">
    <citation type="journal article" date="1986" name="J. Gen. Virol.">
        <title>Measles virus haemagglutinin gene: cloning, complete nucleotide sequence analysis and expression in COS cells.</title>
        <authorList>
            <person name="Gerald C."/>
            <person name="Buckland R."/>
            <person name="Barker R."/>
            <person name="Freeman G."/>
            <person name="Wild T.F."/>
        </authorList>
    </citation>
    <scope>NUCLEOTIDE SEQUENCE [GENOMIC RNA]</scope>
</reference>
<reference key="2">
    <citation type="journal article" date="1996" name="J. Virol.">
        <title>Identification of two amino acids in the hemagglutinin glycoprotein of measles virus (MV) that govern hemadsorption, HeLa cell fusion, and CD46 downregulation: phenotypic markers that differentiate vaccine and wild-type MV strains.</title>
        <authorList>
            <person name="Lecouturier V."/>
            <person name="Fayolle J."/>
            <person name="Caballero M."/>
            <person name="Carabana J."/>
            <person name="Celma M.L."/>
            <person name="Fernandez-Munoz R."/>
            <person name="Wild T.F."/>
            <person name="Buckland R."/>
        </authorList>
    </citation>
    <scope>MUTAGENESIS OF TYR-481</scope>
</reference>
<reference key="3">
    <citation type="journal article" date="1999" name="Biochem. Biophys. Res. Commun.">
        <title>Interaction of measles virus (Halle strain) with CD46: evidence that a common binding site on CD46 facilitates both CD46 downregulation and MV infection.</title>
        <authorList>
            <person name="Lecouturier V."/>
            <person name="Rizzitelli A."/>
            <person name="Fayolle J."/>
            <person name="Daviet L."/>
            <person name="Wild F.T."/>
            <person name="Buckland R."/>
        </authorList>
    </citation>
    <scope>INTERACTION WITH HUMAN CD46</scope>
    <scope>FUNCTION</scope>
</reference>
<reference key="4">
    <citation type="journal article" date="2002" name="J. Gen. Virol.">
        <title>Analysis of receptor (CD46, CD150) usage by measles virus.</title>
        <authorList>
            <person name="Erlenhofer C."/>
            <person name="Duprex W.P."/>
            <person name="Rima B.K."/>
            <person name="ter Meulen V."/>
            <person name="Schneider-Schaulies J."/>
        </authorList>
    </citation>
    <scope>INTERACTION WITH HUMAN CD46 AND SLAMF1</scope>
</reference>
<name>HEMA_MEASH</name>
<comment type="function">
    <text evidence="2 3">Attaches the virus to the human SLAMF1/CD150 receptor for entry into host dendritic cells, macrophages, activated memory T cells and naive or memory B cells, thereby explaining the long immunosuppression that follows infection (By similarity). In the respiratory airways, binds to the NECTIN4 receptor for entry into the host cell (By similarity). Binding of H protein to the receptor induces a conformational change that allows the F protein to trigger virion/cell membranes fusion (By similarity). The vaccine and laboratory-adapted strains use host CD46 as an alternate receptor. The high degree of interaction between H and CD46 results in down-regulation of the latter from the surface of infected cells, rendering them more sensitive to c3b-mediated complement lysis (By similarity).</text>
</comment>
<comment type="subunit">
    <text evidence="2 3 5 6 9">Homodimer; disulfide-linked (By similarity). Further forms homotetramer (dimer of dimers) (By similarity). Interacts (via C-terminus) with human NECTIN4 (via N-terminus); this interaction allows attachment to the respiratory epithelium and viral entry (By similarity). Interacts (via C-terminus) with human SLAMF1/CD150 (via N-terminus); this interaction allows attachment and viral entry into the CD150-expressing immune cells (Probable). Interacts with human CD46 antigen; this interaction allows attachment and viral entry of vaccine and laboratory-adapted strains (PubMed:10527876, PubMed:12029158).</text>
</comment>
<comment type="subcellular location">
    <subcellularLocation>
        <location evidence="8">Virion membrane</location>
        <topology evidence="8">Single-pass type II membrane protein</topology>
    </subcellularLocation>
    <subcellularLocation>
        <location evidence="1">Host cell membrane</location>
        <topology evidence="1">Single-pass type II membrane protein</topology>
    </subcellularLocation>
</comment>
<comment type="miscellaneous">
    <text evidence="3">Infecting host innate immune cells allows the virus to disseminate from the upper respiratory tract to lymphoid organs, and later back to the respiratory tract.</text>
</comment>
<comment type="similarity">
    <text evidence="8">Belongs to the paramyxoviruses hemagglutinin-neuraminidase family. Non-sialidase subfamily.</text>
</comment>
<comment type="caution">
    <text evidence="8">Morbiliviruses hemagglutinins have no neuraminidase activity.</text>
</comment>
<organism>
    <name type="scientific">Measles virus (strain Halle)</name>
    <name type="common">MeV</name>
    <name type="synonym">Subacute sclerose panencephalitis virus</name>
    <dbReference type="NCBI Taxonomy" id="11236"/>
    <lineage>
        <taxon>Viruses</taxon>
        <taxon>Riboviria</taxon>
        <taxon>Orthornavirae</taxon>
        <taxon>Negarnaviricota</taxon>
        <taxon>Haploviricotina</taxon>
        <taxon>Monjiviricetes</taxon>
        <taxon>Mononegavirales</taxon>
        <taxon>Paramyxoviridae</taxon>
        <taxon>Orthoparamyxovirinae</taxon>
        <taxon>Morbillivirus</taxon>
        <taxon>Morbillivirus hominis</taxon>
        <taxon>Measles morbillivirus</taxon>
    </lineage>
</organism>
<dbReference type="EMBL" id="X04720">
    <property type="protein sequence ID" value="CAA28427.1"/>
    <property type="molecule type" value="Genomic_RNA"/>
</dbReference>
<dbReference type="PIR" id="A27007">
    <property type="entry name" value="HMNZHA"/>
</dbReference>
<dbReference type="SMR" id="P06830"/>
<dbReference type="IntAct" id="P06830">
    <property type="interactions" value="1"/>
</dbReference>
<dbReference type="GlyCosmos" id="P06830">
    <property type="glycosylation" value="5 sites, No reported glycans"/>
</dbReference>
<dbReference type="GO" id="GO:0020002">
    <property type="term" value="C:host cell plasma membrane"/>
    <property type="evidence" value="ECO:0007669"/>
    <property type="project" value="UniProtKB-SubCell"/>
</dbReference>
<dbReference type="GO" id="GO:0016020">
    <property type="term" value="C:membrane"/>
    <property type="evidence" value="ECO:0007669"/>
    <property type="project" value="UniProtKB-KW"/>
</dbReference>
<dbReference type="GO" id="GO:0019031">
    <property type="term" value="C:viral envelope"/>
    <property type="evidence" value="ECO:0007669"/>
    <property type="project" value="UniProtKB-KW"/>
</dbReference>
<dbReference type="GO" id="GO:0055036">
    <property type="term" value="C:virion membrane"/>
    <property type="evidence" value="ECO:0007669"/>
    <property type="project" value="UniProtKB-SubCell"/>
</dbReference>
<dbReference type="GO" id="GO:0046789">
    <property type="term" value="F:host cell surface receptor binding"/>
    <property type="evidence" value="ECO:0007669"/>
    <property type="project" value="InterPro"/>
</dbReference>
<dbReference type="GO" id="GO:0046718">
    <property type="term" value="P:symbiont entry into host cell"/>
    <property type="evidence" value="ECO:0007669"/>
    <property type="project" value="UniProtKB-KW"/>
</dbReference>
<dbReference type="GO" id="GO:0019062">
    <property type="term" value="P:virion attachment to host cell"/>
    <property type="evidence" value="ECO:0000314"/>
    <property type="project" value="UniProtKB"/>
</dbReference>
<dbReference type="CDD" id="cd15467">
    <property type="entry name" value="MV-h"/>
    <property type="match status" value="1"/>
</dbReference>
<dbReference type="FunFam" id="2.120.10.10:FF:000007">
    <property type="entry name" value="Hemagglutinin glycoprotein"/>
    <property type="match status" value="1"/>
</dbReference>
<dbReference type="Gene3D" id="2.120.10.10">
    <property type="match status" value="1"/>
</dbReference>
<dbReference type="InterPro" id="IPR000665">
    <property type="entry name" value="Hemagglutn/HN"/>
</dbReference>
<dbReference type="InterPro" id="IPR049617">
    <property type="entry name" value="MV-h_C"/>
</dbReference>
<dbReference type="InterPro" id="IPR036278">
    <property type="entry name" value="Sialidase_sf"/>
</dbReference>
<dbReference type="Pfam" id="PF00423">
    <property type="entry name" value="HN"/>
    <property type="match status" value="1"/>
</dbReference>
<dbReference type="SUPFAM" id="SSF50939">
    <property type="entry name" value="Sialidases"/>
    <property type="match status" value="1"/>
</dbReference>